<evidence type="ECO:0000250" key="1"/>
<evidence type="ECO:0000255" key="2"/>
<evidence type="ECO:0000305" key="3"/>
<dbReference type="EC" id="1.14.19.-"/>
<dbReference type="EMBL" id="AC024174">
    <property type="protein sequence ID" value="AAF80135.1"/>
    <property type="status" value="ALT_SEQ"/>
    <property type="molecule type" value="Genomic_DNA"/>
</dbReference>
<dbReference type="EMBL" id="CP002684">
    <property type="protein sequence ID" value="AEE27941.1"/>
    <property type="molecule type" value="Genomic_DNA"/>
</dbReference>
<dbReference type="EMBL" id="AF332434">
    <property type="protein sequence ID" value="AAG48797.1"/>
    <property type="molecule type" value="mRNA"/>
</dbReference>
<dbReference type="EMBL" id="AK117555">
    <property type="protein sequence ID" value="BAC42216.1"/>
    <property type="molecule type" value="mRNA"/>
</dbReference>
<dbReference type="PIR" id="E86196">
    <property type="entry name" value="E86196"/>
</dbReference>
<dbReference type="RefSeq" id="NP_172102.1">
    <property type="nucleotide sequence ID" value="NM_100493.3"/>
</dbReference>
<dbReference type="SMR" id="Q9FPD5"/>
<dbReference type="FunCoup" id="Q9FPD5">
    <property type="interactions" value="280"/>
</dbReference>
<dbReference type="STRING" id="3702.Q9FPD5"/>
<dbReference type="PaxDb" id="3702-AT1G06120.1"/>
<dbReference type="EnsemblPlants" id="AT1G06120.1">
    <property type="protein sequence ID" value="AT1G06120.1"/>
    <property type="gene ID" value="AT1G06120"/>
</dbReference>
<dbReference type="GeneID" id="837121"/>
<dbReference type="Gramene" id="AT1G06120.1">
    <property type="protein sequence ID" value="AT1G06120.1"/>
    <property type="gene ID" value="AT1G06120"/>
</dbReference>
<dbReference type="KEGG" id="ath:AT1G06120"/>
<dbReference type="Araport" id="AT1G06120"/>
<dbReference type="TAIR" id="AT1G06120"/>
<dbReference type="eggNOG" id="KOG1600">
    <property type="taxonomic scope" value="Eukaryota"/>
</dbReference>
<dbReference type="HOGENOM" id="CLU_027359_1_0_1"/>
<dbReference type="InParanoid" id="Q9FPD5"/>
<dbReference type="OMA" id="VVEEHEY"/>
<dbReference type="OrthoDB" id="10260134at2759"/>
<dbReference type="PhylomeDB" id="Q9FPD5"/>
<dbReference type="BioCyc" id="ARA:AT1G06120-MONOMER"/>
<dbReference type="UniPathway" id="UPA00658"/>
<dbReference type="PRO" id="PR:Q9FPD5"/>
<dbReference type="Proteomes" id="UP000006548">
    <property type="component" value="Chromosome 1"/>
</dbReference>
<dbReference type="ExpressionAtlas" id="Q9FPD5">
    <property type="expression patterns" value="baseline and differential"/>
</dbReference>
<dbReference type="GO" id="GO:0005789">
    <property type="term" value="C:endoplasmic reticulum membrane"/>
    <property type="evidence" value="ECO:0007669"/>
    <property type="project" value="UniProtKB-SubCell"/>
</dbReference>
<dbReference type="GO" id="GO:0016717">
    <property type="term" value="F:oxidoreductase activity, acting on paired donors, with oxidation of a pair of donors resulting in the reduction of molecular oxygen to two molecules of water"/>
    <property type="evidence" value="ECO:0007669"/>
    <property type="project" value="InterPro"/>
</dbReference>
<dbReference type="GO" id="GO:0006636">
    <property type="term" value="P:unsaturated fatty acid biosynthetic process"/>
    <property type="evidence" value="ECO:0007669"/>
    <property type="project" value="UniProtKB-UniPathway"/>
</dbReference>
<dbReference type="CDD" id="cd03505">
    <property type="entry name" value="Delta9-FADS-like"/>
    <property type="match status" value="1"/>
</dbReference>
<dbReference type="InterPro" id="IPR015876">
    <property type="entry name" value="Acyl-CoA_DS"/>
</dbReference>
<dbReference type="InterPro" id="IPR005804">
    <property type="entry name" value="FA_desaturase_dom"/>
</dbReference>
<dbReference type="PANTHER" id="PTHR11351">
    <property type="entry name" value="ACYL-COA DESATURASE"/>
    <property type="match status" value="1"/>
</dbReference>
<dbReference type="PANTHER" id="PTHR11351:SF71">
    <property type="entry name" value="DELTA-9 DESATURASE-LIKE 1 PROTEIN-RELATED"/>
    <property type="match status" value="1"/>
</dbReference>
<dbReference type="Pfam" id="PF00487">
    <property type="entry name" value="FA_desaturase"/>
    <property type="match status" value="1"/>
</dbReference>
<dbReference type="PRINTS" id="PR00075">
    <property type="entry name" value="FACDDSATRASE"/>
</dbReference>
<sequence>MGDKNKDDSSSQSKAVRKEKRAFLFRKWTRVDVMRVSAVGAVHLLCLLAPFNYTWEAFRFAAMVGISTNLSITFSYHRNLTHRSFKLPKWLEYPFAYSALFALQGHPIDWVSTHRFHHQFTDSDRDPHSPIEGFWFSHVFWIFDTSYIREKCGGRDNVMDLKQQWFYRFLQNTIGLHILTFWILVYLWGGLPYLTWSVGVGGAIGYHATWLINSACHIWGSRAWNTKDTSRNIWWLGPFTMGESWHNNHHAFEASARHGLEWYQVDLTWYLIWFFQVLGLATDVKLPTDAQKRKMSLAR</sequence>
<protein>
    <recommendedName>
        <fullName>Delta-9 desaturase-like 3 protein</fullName>
        <ecNumber>1.14.19.-</ecNumber>
    </recommendedName>
</protein>
<reference key="1">
    <citation type="journal article" date="2000" name="Nature">
        <title>Sequence and analysis of chromosome 1 of the plant Arabidopsis thaliana.</title>
        <authorList>
            <person name="Theologis A."/>
            <person name="Ecker J.R."/>
            <person name="Palm C.J."/>
            <person name="Federspiel N.A."/>
            <person name="Kaul S."/>
            <person name="White O."/>
            <person name="Alonso J."/>
            <person name="Altafi H."/>
            <person name="Araujo R."/>
            <person name="Bowman C.L."/>
            <person name="Brooks S.Y."/>
            <person name="Buehler E."/>
            <person name="Chan A."/>
            <person name="Chao Q."/>
            <person name="Chen H."/>
            <person name="Cheuk R.F."/>
            <person name="Chin C.W."/>
            <person name="Chung M.K."/>
            <person name="Conn L."/>
            <person name="Conway A.B."/>
            <person name="Conway A.R."/>
            <person name="Creasy T.H."/>
            <person name="Dewar K."/>
            <person name="Dunn P."/>
            <person name="Etgu P."/>
            <person name="Feldblyum T.V."/>
            <person name="Feng J.-D."/>
            <person name="Fong B."/>
            <person name="Fujii C.Y."/>
            <person name="Gill J.E."/>
            <person name="Goldsmith A.D."/>
            <person name="Haas B."/>
            <person name="Hansen N.F."/>
            <person name="Hughes B."/>
            <person name="Huizar L."/>
            <person name="Hunter J.L."/>
            <person name="Jenkins J."/>
            <person name="Johnson-Hopson C."/>
            <person name="Khan S."/>
            <person name="Khaykin E."/>
            <person name="Kim C.J."/>
            <person name="Koo H.L."/>
            <person name="Kremenetskaia I."/>
            <person name="Kurtz D.B."/>
            <person name="Kwan A."/>
            <person name="Lam B."/>
            <person name="Langin-Hooper S."/>
            <person name="Lee A."/>
            <person name="Lee J.M."/>
            <person name="Lenz C.A."/>
            <person name="Li J.H."/>
            <person name="Li Y.-P."/>
            <person name="Lin X."/>
            <person name="Liu S.X."/>
            <person name="Liu Z.A."/>
            <person name="Luros J.S."/>
            <person name="Maiti R."/>
            <person name="Marziali A."/>
            <person name="Militscher J."/>
            <person name="Miranda M."/>
            <person name="Nguyen M."/>
            <person name="Nierman W.C."/>
            <person name="Osborne B.I."/>
            <person name="Pai G."/>
            <person name="Peterson J."/>
            <person name="Pham P.K."/>
            <person name="Rizzo M."/>
            <person name="Rooney T."/>
            <person name="Rowley D."/>
            <person name="Sakano H."/>
            <person name="Salzberg S.L."/>
            <person name="Schwartz J.R."/>
            <person name="Shinn P."/>
            <person name="Southwick A.M."/>
            <person name="Sun H."/>
            <person name="Tallon L.J."/>
            <person name="Tambunga G."/>
            <person name="Toriumi M.J."/>
            <person name="Town C.D."/>
            <person name="Utterback T."/>
            <person name="Van Aken S."/>
            <person name="Vaysberg M."/>
            <person name="Vysotskaia V.S."/>
            <person name="Walker M."/>
            <person name="Wu D."/>
            <person name="Yu G."/>
            <person name="Fraser C.M."/>
            <person name="Venter J.C."/>
            <person name="Davis R.W."/>
        </authorList>
    </citation>
    <scope>NUCLEOTIDE SEQUENCE [LARGE SCALE GENOMIC DNA]</scope>
    <source>
        <strain>cv. Columbia</strain>
    </source>
</reference>
<reference key="2">
    <citation type="journal article" date="2017" name="Plant J.">
        <title>Araport11: a complete reannotation of the Arabidopsis thaliana reference genome.</title>
        <authorList>
            <person name="Cheng C.Y."/>
            <person name="Krishnakumar V."/>
            <person name="Chan A.P."/>
            <person name="Thibaud-Nissen F."/>
            <person name="Schobel S."/>
            <person name="Town C.D."/>
        </authorList>
    </citation>
    <scope>GENOME REANNOTATION</scope>
    <source>
        <strain>cv. Columbia</strain>
    </source>
</reference>
<reference key="3">
    <citation type="journal article" date="2003" name="Science">
        <title>Empirical analysis of transcriptional activity in the Arabidopsis genome.</title>
        <authorList>
            <person name="Yamada K."/>
            <person name="Lim J."/>
            <person name="Dale J.M."/>
            <person name="Chen H."/>
            <person name="Shinn P."/>
            <person name="Palm C.J."/>
            <person name="Southwick A.M."/>
            <person name="Wu H.C."/>
            <person name="Kim C.J."/>
            <person name="Nguyen M."/>
            <person name="Pham P.K."/>
            <person name="Cheuk R.F."/>
            <person name="Karlin-Newmann G."/>
            <person name="Liu S.X."/>
            <person name="Lam B."/>
            <person name="Sakano H."/>
            <person name="Wu T."/>
            <person name="Yu G."/>
            <person name="Miranda M."/>
            <person name="Quach H.L."/>
            <person name="Tripp M."/>
            <person name="Chang C.H."/>
            <person name="Lee J.M."/>
            <person name="Toriumi M.J."/>
            <person name="Chan M.M."/>
            <person name="Tang C.C."/>
            <person name="Onodera C.S."/>
            <person name="Deng J.M."/>
            <person name="Akiyama K."/>
            <person name="Ansari Y."/>
            <person name="Arakawa T."/>
            <person name="Banh J."/>
            <person name="Banno F."/>
            <person name="Bowser L."/>
            <person name="Brooks S.Y."/>
            <person name="Carninci P."/>
            <person name="Chao Q."/>
            <person name="Choy N."/>
            <person name="Enju A."/>
            <person name="Goldsmith A.D."/>
            <person name="Gurjal M."/>
            <person name="Hansen N.F."/>
            <person name="Hayashizaki Y."/>
            <person name="Johnson-Hopson C."/>
            <person name="Hsuan V.W."/>
            <person name="Iida K."/>
            <person name="Karnes M."/>
            <person name="Khan S."/>
            <person name="Koesema E."/>
            <person name="Ishida J."/>
            <person name="Jiang P.X."/>
            <person name="Jones T."/>
            <person name="Kawai J."/>
            <person name="Kamiya A."/>
            <person name="Meyers C."/>
            <person name="Nakajima M."/>
            <person name="Narusaka M."/>
            <person name="Seki M."/>
            <person name="Sakurai T."/>
            <person name="Satou M."/>
            <person name="Tamse R."/>
            <person name="Vaysberg M."/>
            <person name="Wallender E.K."/>
            <person name="Wong C."/>
            <person name="Yamamura Y."/>
            <person name="Yuan S."/>
            <person name="Shinozaki K."/>
            <person name="Davis R.W."/>
            <person name="Theologis A."/>
            <person name="Ecker J.R."/>
        </authorList>
    </citation>
    <scope>NUCLEOTIDE SEQUENCE [LARGE SCALE MRNA]</scope>
    <source>
        <strain>cv. Columbia</strain>
    </source>
</reference>
<reference key="4">
    <citation type="journal article" date="2002" name="Science">
        <title>Functional annotation of a full-length Arabidopsis cDNA collection.</title>
        <authorList>
            <person name="Seki M."/>
            <person name="Narusaka M."/>
            <person name="Kamiya A."/>
            <person name="Ishida J."/>
            <person name="Satou M."/>
            <person name="Sakurai T."/>
            <person name="Nakajima M."/>
            <person name="Enju A."/>
            <person name="Akiyama K."/>
            <person name="Oono Y."/>
            <person name="Muramatsu M."/>
            <person name="Hayashizaki Y."/>
            <person name="Kawai J."/>
            <person name="Carninci P."/>
            <person name="Itoh M."/>
            <person name="Ishii Y."/>
            <person name="Arakawa T."/>
            <person name="Shibata K."/>
            <person name="Shinagawa A."/>
            <person name="Shinozaki K."/>
        </authorList>
    </citation>
    <scope>NUCLEOTIDE SEQUENCE [LARGE SCALE MRNA]</scope>
    <source>
        <strain>cv. Columbia</strain>
    </source>
</reference>
<comment type="cofactor">
    <cofactor evidence="1">
        <name>Fe cation</name>
        <dbReference type="ChEBI" id="CHEBI:24875"/>
    </cofactor>
</comment>
<comment type="pathway">
    <text>Lipid metabolism; polyunsaturated fatty acid biosynthesis.</text>
</comment>
<comment type="subcellular location">
    <subcellularLocation>
        <location evidence="1">Endoplasmic reticulum membrane</location>
        <topology evidence="1">Multi-pass membrane protein</topology>
    </subcellularLocation>
</comment>
<comment type="domain">
    <text evidence="1">The histidine box domains may contain the active site and/or be involved in metal ion binding.</text>
</comment>
<comment type="similarity">
    <text evidence="3">Belongs to the fatty acid desaturase type 1 family.</text>
</comment>
<comment type="sequence caution" evidence="3">
    <conflict type="erroneous gene model prediction">
        <sequence resource="EMBL-CDS" id="AAF80135"/>
    </conflict>
</comment>
<gene>
    <name type="ordered locus">At1g06120</name>
    <name type="ORF">T21E18.17</name>
    <name type="ORF">T21E18_14</name>
</gene>
<keyword id="KW-0256">Endoplasmic reticulum</keyword>
<keyword id="KW-0275">Fatty acid biosynthesis</keyword>
<keyword id="KW-0276">Fatty acid metabolism</keyword>
<keyword id="KW-0408">Iron</keyword>
<keyword id="KW-0444">Lipid biosynthesis</keyword>
<keyword id="KW-0443">Lipid metabolism</keyword>
<keyword id="KW-0472">Membrane</keyword>
<keyword id="KW-0560">Oxidoreductase</keyword>
<keyword id="KW-1185">Reference proteome</keyword>
<keyword id="KW-0812">Transmembrane</keyword>
<keyword id="KW-1133">Transmembrane helix</keyword>
<proteinExistence type="evidence at transcript level"/>
<accession>Q9FPD5</accession>
<accession>Q9LND6</accession>
<feature type="chain" id="PRO_0000185429" description="Delta-9 desaturase-like 3 protein">
    <location>
        <begin position="1"/>
        <end position="299"/>
    </location>
</feature>
<feature type="transmembrane region" description="Helical" evidence="2">
    <location>
        <begin position="38"/>
        <end position="57"/>
    </location>
</feature>
<feature type="transmembrane region" description="Helical" evidence="2">
    <location>
        <begin position="58"/>
        <end position="76"/>
    </location>
</feature>
<feature type="transmembrane region" description="Helical" evidence="2">
    <location>
        <begin position="174"/>
        <end position="194"/>
    </location>
</feature>
<feature type="transmembrane region" description="Helical" evidence="2">
    <location>
        <begin position="198"/>
        <end position="218"/>
    </location>
</feature>
<feature type="transmembrane region" description="Helical" evidence="2">
    <location>
        <begin position="262"/>
        <end position="282"/>
    </location>
</feature>
<feature type="short sequence motif" description="Histidine box-1">
    <location>
        <begin position="77"/>
        <end position="82"/>
    </location>
</feature>
<feature type="short sequence motif" description="Histidine box-2">
    <location>
        <begin position="114"/>
        <end position="118"/>
    </location>
</feature>
<feature type="short sequence motif" description="Histidine box-3">
    <location>
        <begin position="246"/>
        <end position="250"/>
    </location>
</feature>
<name>ADSL3_ARATH</name>
<organism>
    <name type="scientific">Arabidopsis thaliana</name>
    <name type="common">Mouse-ear cress</name>
    <dbReference type="NCBI Taxonomy" id="3702"/>
    <lineage>
        <taxon>Eukaryota</taxon>
        <taxon>Viridiplantae</taxon>
        <taxon>Streptophyta</taxon>
        <taxon>Embryophyta</taxon>
        <taxon>Tracheophyta</taxon>
        <taxon>Spermatophyta</taxon>
        <taxon>Magnoliopsida</taxon>
        <taxon>eudicotyledons</taxon>
        <taxon>Gunneridae</taxon>
        <taxon>Pentapetalae</taxon>
        <taxon>rosids</taxon>
        <taxon>malvids</taxon>
        <taxon>Brassicales</taxon>
        <taxon>Brassicaceae</taxon>
        <taxon>Camelineae</taxon>
        <taxon>Arabidopsis</taxon>
    </lineage>
</organism>